<feature type="chain" id="PRO_1000063845" description="3-isopropylmalate dehydratase small subunit">
    <location>
        <begin position="1"/>
        <end position="191"/>
    </location>
</feature>
<sequence>MIPFTNFESRLIKLPINNVDTDQIIPARFLKTTSKVGLDKQLFNDWRQDPDFVLNRPESQGLQILLAGDNFGCGSSREHAPWALTQWGFRAVISTSFADIFKQNSLKNSLLPIEVPADVHAELFSSDGPAKIDLPNQTLTTPSGREVHFEVDQFSKHCLVKGVDELGYILEQAPEIAAYEASHPAPINALA</sequence>
<comment type="function">
    <text evidence="1">Catalyzes the isomerization between 2-isopropylmalate and 3-isopropylmalate, via the formation of 2-isopropylmaleate.</text>
</comment>
<comment type="catalytic activity">
    <reaction evidence="1">
        <text>(2R,3S)-3-isopropylmalate = (2S)-2-isopropylmalate</text>
        <dbReference type="Rhea" id="RHEA:32287"/>
        <dbReference type="ChEBI" id="CHEBI:1178"/>
        <dbReference type="ChEBI" id="CHEBI:35121"/>
        <dbReference type="EC" id="4.2.1.33"/>
    </reaction>
</comment>
<comment type="pathway">
    <text evidence="1">Amino-acid biosynthesis; L-leucine biosynthesis; L-leucine from 3-methyl-2-oxobutanoate: step 2/4.</text>
</comment>
<comment type="subunit">
    <text evidence="1">Heterodimer of LeuC and LeuD.</text>
</comment>
<comment type="similarity">
    <text evidence="1">Belongs to the LeuD family. LeuD type 1 subfamily.</text>
</comment>
<accession>Q01Z80</accession>
<keyword id="KW-0028">Amino-acid biosynthesis</keyword>
<keyword id="KW-0100">Branched-chain amino acid biosynthesis</keyword>
<keyword id="KW-0432">Leucine biosynthesis</keyword>
<keyword id="KW-0456">Lyase</keyword>
<protein>
    <recommendedName>
        <fullName evidence="1">3-isopropylmalate dehydratase small subunit</fullName>
        <ecNumber evidence="1">4.2.1.33</ecNumber>
    </recommendedName>
    <alternativeName>
        <fullName evidence="1">Alpha-IPM isomerase</fullName>
        <shortName evidence="1">IPMI</shortName>
    </alternativeName>
    <alternativeName>
        <fullName evidence="1">Isopropylmalate isomerase</fullName>
    </alternativeName>
</protein>
<organism>
    <name type="scientific">Solibacter usitatus (strain Ellin6076)</name>
    <dbReference type="NCBI Taxonomy" id="234267"/>
    <lineage>
        <taxon>Bacteria</taxon>
        <taxon>Pseudomonadati</taxon>
        <taxon>Acidobacteriota</taxon>
        <taxon>Terriglobia</taxon>
        <taxon>Bryobacterales</taxon>
        <taxon>Solibacteraceae</taxon>
        <taxon>Candidatus Solibacter</taxon>
    </lineage>
</organism>
<gene>
    <name evidence="1" type="primary">leuD</name>
    <name type="ordered locus">Acid_4070</name>
</gene>
<evidence type="ECO:0000255" key="1">
    <source>
        <dbReference type="HAMAP-Rule" id="MF_01031"/>
    </source>
</evidence>
<dbReference type="EC" id="4.2.1.33" evidence="1"/>
<dbReference type="EMBL" id="CP000473">
    <property type="protein sequence ID" value="ABJ85035.1"/>
    <property type="molecule type" value="Genomic_DNA"/>
</dbReference>
<dbReference type="SMR" id="Q01Z80"/>
<dbReference type="FunCoup" id="Q01Z80">
    <property type="interactions" value="580"/>
</dbReference>
<dbReference type="STRING" id="234267.Acid_4070"/>
<dbReference type="KEGG" id="sus:Acid_4070"/>
<dbReference type="eggNOG" id="COG0066">
    <property type="taxonomic scope" value="Bacteria"/>
</dbReference>
<dbReference type="HOGENOM" id="CLU_081378_0_3_0"/>
<dbReference type="InParanoid" id="Q01Z80"/>
<dbReference type="OrthoDB" id="9777465at2"/>
<dbReference type="UniPathway" id="UPA00048">
    <property type="reaction ID" value="UER00071"/>
</dbReference>
<dbReference type="GO" id="GO:0009316">
    <property type="term" value="C:3-isopropylmalate dehydratase complex"/>
    <property type="evidence" value="ECO:0007669"/>
    <property type="project" value="InterPro"/>
</dbReference>
<dbReference type="GO" id="GO:0003861">
    <property type="term" value="F:3-isopropylmalate dehydratase activity"/>
    <property type="evidence" value="ECO:0007669"/>
    <property type="project" value="UniProtKB-UniRule"/>
</dbReference>
<dbReference type="GO" id="GO:0009098">
    <property type="term" value="P:L-leucine biosynthetic process"/>
    <property type="evidence" value="ECO:0007669"/>
    <property type="project" value="UniProtKB-UniRule"/>
</dbReference>
<dbReference type="CDD" id="cd01577">
    <property type="entry name" value="IPMI_Swivel"/>
    <property type="match status" value="1"/>
</dbReference>
<dbReference type="FunFam" id="3.20.19.10:FF:000003">
    <property type="entry name" value="3-isopropylmalate dehydratase small subunit"/>
    <property type="match status" value="1"/>
</dbReference>
<dbReference type="Gene3D" id="3.20.19.10">
    <property type="entry name" value="Aconitase, domain 4"/>
    <property type="match status" value="1"/>
</dbReference>
<dbReference type="HAMAP" id="MF_01031">
    <property type="entry name" value="LeuD_type1"/>
    <property type="match status" value="1"/>
</dbReference>
<dbReference type="InterPro" id="IPR004431">
    <property type="entry name" value="3-IsopropMal_deHydase_ssu"/>
</dbReference>
<dbReference type="InterPro" id="IPR015928">
    <property type="entry name" value="Aconitase/3IPM_dehydase_swvl"/>
</dbReference>
<dbReference type="InterPro" id="IPR000573">
    <property type="entry name" value="AconitaseA/IPMdHydase_ssu_swvl"/>
</dbReference>
<dbReference type="InterPro" id="IPR033940">
    <property type="entry name" value="IPMI_Swivel"/>
</dbReference>
<dbReference type="InterPro" id="IPR050075">
    <property type="entry name" value="LeuD"/>
</dbReference>
<dbReference type="NCBIfam" id="TIGR00171">
    <property type="entry name" value="leuD"/>
    <property type="match status" value="1"/>
</dbReference>
<dbReference type="NCBIfam" id="NF002458">
    <property type="entry name" value="PRK01641.1"/>
    <property type="match status" value="1"/>
</dbReference>
<dbReference type="PANTHER" id="PTHR43345:SF5">
    <property type="entry name" value="3-ISOPROPYLMALATE DEHYDRATASE SMALL SUBUNIT"/>
    <property type="match status" value="1"/>
</dbReference>
<dbReference type="PANTHER" id="PTHR43345">
    <property type="entry name" value="3-ISOPROPYLMALATE DEHYDRATASE SMALL SUBUNIT 2-RELATED-RELATED"/>
    <property type="match status" value="1"/>
</dbReference>
<dbReference type="Pfam" id="PF00694">
    <property type="entry name" value="Aconitase_C"/>
    <property type="match status" value="1"/>
</dbReference>
<dbReference type="SUPFAM" id="SSF52016">
    <property type="entry name" value="LeuD/IlvD-like"/>
    <property type="match status" value="1"/>
</dbReference>
<name>LEUD_SOLUE</name>
<proteinExistence type="inferred from homology"/>
<reference key="1">
    <citation type="journal article" date="2009" name="Appl. Environ. Microbiol.">
        <title>Three genomes from the phylum Acidobacteria provide insight into the lifestyles of these microorganisms in soils.</title>
        <authorList>
            <person name="Ward N.L."/>
            <person name="Challacombe J.F."/>
            <person name="Janssen P.H."/>
            <person name="Henrissat B."/>
            <person name="Coutinho P.M."/>
            <person name="Wu M."/>
            <person name="Xie G."/>
            <person name="Haft D.H."/>
            <person name="Sait M."/>
            <person name="Badger J."/>
            <person name="Barabote R.D."/>
            <person name="Bradley B."/>
            <person name="Brettin T.S."/>
            <person name="Brinkac L.M."/>
            <person name="Bruce D."/>
            <person name="Creasy T."/>
            <person name="Daugherty S.C."/>
            <person name="Davidsen T.M."/>
            <person name="DeBoy R.T."/>
            <person name="Detter J.C."/>
            <person name="Dodson R.J."/>
            <person name="Durkin A.S."/>
            <person name="Ganapathy A."/>
            <person name="Gwinn-Giglio M."/>
            <person name="Han C.S."/>
            <person name="Khouri H."/>
            <person name="Kiss H."/>
            <person name="Kothari S.P."/>
            <person name="Madupu R."/>
            <person name="Nelson K.E."/>
            <person name="Nelson W.C."/>
            <person name="Paulsen I."/>
            <person name="Penn K."/>
            <person name="Ren Q."/>
            <person name="Rosovitz M.J."/>
            <person name="Selengut J.D."/>
            <person name="Shrivastava S."/>
            <person name="Sullivan S.A."/>
            <person name="Tapia R."/>
            <person name="Thompson L.S."/>
            <person name="Watkins K.L."/>
            <person name="Yang Q."/>
            <person name="Yu C."/>
            <person name="Zafar N."/>
            <person name="Zhou L."/>
            <person name="Kuske C.R."/>
        </authorList>
    </citation>
    <scope>NUCLEOTIDE SEQUENCE [LARGE SCALE GENOMIC DNA]</scope>
    <source>
        <strain>Ellin6076</strain>
    </source>
</reference>